<dbReference type="EC" id="2.3.-.-" evidence="1"/>
<dbReference type="EMBL" id="BC116121">
    <property type="protein sequence ID" value="AAI16122.1"/>
    <property type="molecule type" value="mRNA"/>
</dbReference>
<dbReference type="RefSeq" id="NP_001070577.1">
    <property type="nucleotide sequence ID" value="NM_001077109.1"/>
</dbReference>
<dbReference type="SMR" id="Q1LZA4"/>
<dbReference type="FunCoup" id="Q1LZA4">
    <property type="interactions" value="1538"/>
</dbReference>
<dbReference type="STRING" id="9913.ENSBTAP00000045720"/>
<dbReference type="GlyCosmos" id="Q1LZA4">
    <property type="glycosylation" value="1 site, No reported glycans"/>
</dbReference>
<dbReference type="GlyGen" id="Q1LZA4">
    <property type="glycosylation" value="1 site"/>
</dbReference>
<dbReference type="PaxDb" id="9913-ENSBTAP00000045720"/>
<dbReference type="GeneID" id="768052"/>
<dbReference type="KEGG" id="bta:768052"/>
<dbReference type="CTD" id="284098"/>
<dbReference type="eggNOG" id="KOG0411">
    <property type="taxonomic scope" value="Eukaryota"/>
</dbReference>
<dbReference type="InParanoid" id="Q1LZA4"/>
<dbReference type="OrthoDB" id="15270at2759"/>
<dbReference type="UniPathway" id="UPA00196"/>
<dbReference type="Proteomes" id="UP000009136">
    <property type="component" value="Unplaced"/>
</dbReference>
<dbReference type="GO" id="GO:0005789">
    <property type="term" value="C:endoplasmic reticulum membrane"/>
    <property type="evidence" value="ECO:0000250"/>
    <property type="project" value="UniProtKB"/>
</dbReference>
<dbReference type="GO" id="GO:0032216">
    <property type="term" value="F:glucosaminyl-phosphatidylinositol O-acyltransferase activity"/>
    <property type="evidence" value="ECO:0000250"/>
    <property type="project" value="UniProtKB"/>
</dbReference>
<dbReference type="GO" id="GO:0006506">
    <property type="term" value="P:GPI anchor biosynthetic process"/>
    <property type="evidence" value="ECO:0000250"/>
    <property type="project" value="UniProtKB"/>
</dbReference>
<dbReference type="GO" id="GO:0072659">
    <property type="term" value="P:protein localization to plasma membrane"/>
    <property type="evidence" value="ECO:0000250"/>
    <property type="project" value="UniProtKB"/>
</dbReference>
<dbReference type="InterPro" id="IPR009447">
    <property type="entry name" value="PIGW/GWT1"/>
</dbReference>
<dbReference type="PANTHER" id="PTHR20661">
    <property type="entry name" value="PHOSPHATIDYLINOSITOL-GLYCAN BIOSYNTHESIS CLASS W PROTEIN"/>
    <property type="match status" value="1"/>
</dbReference>
<dbReference type="PANTHER" id="PTHR20661:SF0">
    <property type="entry name" value="PHOSPHATIDYLINOSITOL-GLYCAN BIOSYNTHESIS CLASS W PROTEIN"/>
    <property type="match status" value="1"/>
</dbReference>
<dbReference type="Pfam" id="PF06423">
    <property type="entry name" value="GWT1"/>
    <property type="match status" value="1"/>
</dbReference>
<dbReference type="PIRSF" id="PIRSF017321">
    <property type="entry name" value="GWT1"/>
    <property type="match status" value="1"/>
</dbReference>
<organism>
    <name type="scientific">Bos taurus</name>
    <name type="common">Bovine</name>
    <dbReference type="NCBI Taxonomy" id="9913"/>
    <lineage>
        <taxon>Eukaryota</taxon>
        <taxon>Metazoa</taxon>
        <taxon>Chordata</taxon>
        <taxon>Craniata</taxon>
        <taxon>Vertebrata</taxon>
        <taxon>Euteleostomi</taxon>
        <taxon>Mammalia</taxon>
        <taxon>Eutheria</taxon>
        <taxon>Laurasiatheria</taxon>
        <taxon>Artiodactyla</taxon>
        <taxon>Ruminantia</taxon>
        <taxon>Pecora</taxon>
        <taxon>Bovidae</taxon>
        <taxon>Bovinae</taxon>
        <taxon>Bos</taxon>
    </lineage>
</organism>
<accession>Q1LZA4</accession>
<feature type="chain" id="PRO_0000246281" description="Glucosaminyl-phosphatidylinositol-acyltransferase PIGW">
    <location>
        <begin position="1"/>
        <end position="503"/>
    </location>
</feature>
<feature type="topological domain" description="Lumenal" evidence="1">
    <location>
        <begin position="1"/>
        <end position="21"/>
    </location>
</feature>
<feature type="transmembrane region" description="Helical" evidence="3">
    <location>
        <begin position="22"/>
        <end position="42"/>
    </location>
</feature>
<feature type="topological domain" description="Cytoplasmic" evidence="1">
    <location>
        <begin position="43"/>
        <end position="56"/>
    </location>
</feature>
<feature type="transmembrane region" description="Helical" evidence="3">
    <location>
        <begin position="57"/>
        <end position="75"/>
    </location>
</feature>
<feature type="topological domain" description="Lumenal" evidence="1">
    <location>
        <begin position="76"/>
        <end position="78"/>
    </location>
</feature>
<feature type="transmembrane region" description="Helical" evidence="3">
    <location>
        <begin position="79"/>
        <end position="98"/>
    </location>
</feature>
<feature type="topological domain" description="Cytoplasmic" evidence="1">
    <location>
        <begin position="99"/>
        <end position="131"/>
    </location>
</feature>
<feature type="transmembrane region" description="Helical" evidence="3">
    <location>
        <begin position="132"/>
        <end position="152"/>
    </location>
</feature>
<feature type="topological domain" description="Lumenal" evidence="1">
    <location>
        <begin position="153"/>
        <end position="160"/>
    </location>
</feature>
<feature type="transmembrane region" description="Helical" evidence="3">
    <location>
        <begin position="161"/>
        <end position="181"/>
    </location>
</feature>
<feature type="topological domain" description="Cytoplasmic" evidence="1">
    <location>
        <begin position="182"/>
        <end position="201"/>
    </location>
</feature>
<feature type="transmembrane region" description="Helical" evidence="3">
    <location>
        <begin position="202"/>
        <end position="222"/>
    </location>
</feature>
<feature type="topological domain" description="Lumenal" evidence="1">
    <location>
        <begin position="223"/>
        <end position="236"/>
    </location>
</feature>
<feature type="transmembrane region" description="Helical" evidence="3">
    <location>
        <begin position="237"/>
        <end position="257"/>
    </location>
</feature>
<feature type="topological domain" description="Cytoplasmic" evidence="1">
    <location>
        <begin position="258"/>
        <end position="259"/>
    </location>
</feature>
<feature type="transmembrane region" description="Helical" evidence="3">
    <location>
        <begin position="260"/>
        <end position="280"/>
    </location>
</feature>
<feature type="topological domain" description="Lumenal" evidence="1">
    <location>
        <begin position="281"/>
        <end position="304"/>
    </location>
</feature>
<feature type="transmembrane region" description="Helical" evidence="3">
    <location>
        <begin position="305"/>
        <end position="325"/>
    </location>
</feature>
<feature type="topological domain" description="Cytoplasmic" evidence="1">
    <location>
        <begin position="326"/>
        <end position="337"/>
    </location>
</feature>
<feature type="transmembrane region" description="Helical" evidence="3">
    <location>
        <begin position="338"/>
        <end position="358"/>
    </location>
</feature>
<feature type="topological domain" description="Lumenal" evidence="1">
    <location>
        <begin position="359"/>
        <end position="369"/>
    </location>
</feature>
<feature type="transmembrane region" description="Helical" evidence="3">
    <location>
        <begin position="370"/>
        <end position="390"/>
    </location>
</feature>
<feature type="topological domain" description="Cytoplasmic" evidence="1">
    <location>
        <begin position="391"/>
        <end position="447"/>
    </location>
</feature>
<feature type="transmembrane region" description="Helical" evidence="3">
    <location>
        <begin position="448"/>
        <end position="468"/>
    </location>
</feature>
<feature type="topological domain" description="Lumenal" evidence="1">
    <location>
        <begin position="469"/>
        <end position="472"/>
    </location>
</feature>
<feature type="transmembrane region" description="Helical" evidence="3">
    <location>
        <begin position="473"/>
        <end position="493"/>
    </location>
</feature>
<feature type="topological domain" description="Cytoplasmic" evidence="1">
    <location>
        <begin position="494"/>
        <end position="503"/>
    </location>
</feature>
<feature type="modified residue" description="Phosphoserine" evidence="2">
    <location>
        <position position="415"/>
    </location>
</feature>
<feature type="glycosylation site" description="N-linked (GlcNAc...) asparagine" evidence="3">
    <location>
        <position position="15"/>
    </location>
</feature>
<gene>
    <name evidence="2" type="primary">PIGW</name>
</gene>
<comment type="function">
    <text evidence="1 2">Acyltransferase that catalyzes the acyl transfer from an acyl-CoA at the 2-OH position of the inositol ring of glucosaminyl phosphatidylinositol (GlcN-PI) to generate glucosaminyl acyl phosphatidylinositol (GlcN-(acyl)PI) and participates in the fourth step of GPI-anchor biosynthesis (By similarity). Required for the transport of GPI-anchored proteins to the plasma membrane (By similarity). Acetylation during GPI-anchor biosynthesis is not essential for the subsequent mannosylation and is usually removed soon after the attachment of GPIs to proteins (By similarity).</text>
</comment>
<comment type="pathway">
    <text evidence="1">Glycolipid biosynthesis; glycosylphosphatidylinositol-anchor biosynthesis.</text>
</comment>
<comment type="subcellular location">
    <subcellularLocation>
        <location evidence="1">Endoplasmic reticulum membrane</location>
        <topology evidence="1">Multi-pass membrane protein</topology>
    </subcellularLocation>
</comment>
<comment type="similarity">
    <text evidence="4">Belongs to the PIGW family.</text>
</comment>
<sequence length="503" mass="56298">MSQKQMKEAFVSNQNGTSVLEITEGLCLPALCILCRGLLIILSQQLCSSLHNSRTRFLVDFAFLIVPLVTTLTIFSSFVLLEYLVAIILGAGLLYEIYCRRTCYARMPFQKICEKFLKVSLESEHIPAISCFRVVNSAFTAVAILAVDFPLFPRRYAKTELYGTGAMDYGVGGFIFGSAMVSPEVRRKYTKGSRFCYLTKSLYSLWPLVFLGVGRLVAIKSVDYQEHLTEYGVHWNFFFTLIAVKLITSLLLLICPLNRSWVVAISIAALYQLALDFTPLKSLILYGTDGSGTRVGLLNANREGIISVLGYVAVHMAGVQTGLYVLKKRSHIKDWIKVACCILLTAIGLFISLYIVQVNVEVASRRMANLAFCIWIVASCLILLSSLLLGDIILSFAKFVIKEAAVPCSWKLIQSPTANKKHLESIVFDAKRKEPTLCLITAMNRNQLLFFLLSNVTTGLVNLSIDTLHSSTPWALCLLNLYMFTNCLIIYVLHLQDKTIKFW</sequence>
<reference key="1">
    <citation type="submission" date="2006-05" db="EMBL/GenBank/DDBJ databases">
        <authorList>
            <consortium name="NIH - Mammalian Gene Collection (MGC) project"/>
        </authorList>
    </citation>
    <scope>NUCLEOTIDE SEQUENCE [LARGE SCALE MRNA]</scope>
    <source>
        <strain>Hereford</strain>
        <tissue>Ascending colon</tissue>
    </source>
</reference>
<protein>
    <recommendedName>
        <fullName evidence="2">Glucosaminyl-phosphatidylinositol-acyltransferase PIGW</fullName>
        <shortName>GlcN-PI-acyltransferase</shortName>
        <ecNumber evidence="1">2.3.-.-</ecNumber>
    </recommendedName>
    <alternativeName>
        <fullName evidence="4">Phosphatidylinositol-glycan biosynthesis class W protein</fullName>
        <shortName evidence="4">PIG-W</shortName>
    </alternativeName>
</protein>
<evidence type="ECO:0000250" key="1">
    <source>
        <dbReference type="UniProtKB" id="Q7TSN4"/>
    </source>
</evidence>
<evidence type="ECO:0000250" key="2">
    <source>
        <dbReference type="UniProtKB" id="Q7Z7B1"/>
    </source>
</evidence>
<evidence type="ECO:0000255" key="3"/>
<evidence type="ECO:0000305" key="4"/>
<keyword id="KW-0012">Acyltransferase</keyword>
<keyword id="KW-0256">Endoplasmic reticulum</keyword>
<keyword id="KW-0325">Glycoprotein</keyword>
<keyword id="KW-0337">GPI-anchor biosynthesis</keyword>
<keyword id="KW-0472">Membrane</keyword>
<keyword id="KW-0597">Phosphoprotein</keyword>
<keyword id="KW-1185">Reference proteome</keyword>
<keyword id="KW-0808">Transferase</keyword>
<keyword id="KW-0812">Transmembrane</keyword>
<keyword id="KW-1133">Transmembrane helix</keyword>
<name>PIGW_BOVIN</name>
<proteinExistence type="evidence at transcript level"/>